<comment type="function">
    <text evidence="4">Component of the microsomal membrane bound fatty acid elongation system, which produces the 26-carbon very long-chain fatty acids (VLCFA) from palmitate. Catalyzes the reduction of the 3-ketoacyl-CoA intermediate that is formed in each cycle of fatty acid elongation. VLCFAs serve as precursors for ceramide and sphingolipids.</text>
</comment>
<comment type="catalytic activity">
    <reaction evidence="4">
        <text>a very-long-chain (3R)-3-hydroxyacyl-CoA + NADP(+) = a very-long-chain 3-oxoacyl-CoA + NADPH + H(+)</text>
        <dbReference type="Rhea" id="RHEA:48680"/>
        <dbReference type="ChEBI" id="CHEBI:15378"/>
        <dbReference type="ChEBI" id="CHEBI:57783"/>
        <dbReference type="ChEBI" id="CHEBI:58349"/>
        <dbReference type="ChEBI" id="CHEBI:85440"/>
        <dbReference type="ChEBI" id="CHEBI:90725"/>
        <dbReference type="EC" id="1.1.1.330"/>
    </reaction>
</comment>
<comment type="pathway">
    <text evidence="3">Lipid metabolism; fatty acid biosynthesis.</text>
</comment>
<comment type="subcellular location">
    <subcellularLocation>
        <location evidence="4">Endoplasmic reticulum membrane</location>
        <topology evidence="4">Single-pass membrane protein</topology>
    </subcellularLocation>
</comment>
<comment type="similarity">
    <text evidence="4">Belongs to the short-chain dehydrogenases/reductases (SDR) family.</text>
</comment>
<protein>
    <recommendedName>
        <fullName evidence="4">Very-long-chain 3-oxoacyl-CoA reductase</fullName>
        <ecNumber evidence="4">1.1.1.330</ecNumber>
    </recommendedName>
    <alternativeName>
        <fullName evidence="4">3-ketoacyl-CoA reductase</fullName>
        <shortName evidence="4">3-ketoreductase</shortName>
        <shortName evidence="4">KAR</shortName>
    </alternativeName>
    <alternativeName>
        <fullName evidence="4">Microsomal beta-keto-reductase</fullName>
    </alternativeName>
</protein>
<sequence>MESLIQVQDVVQRFIREQPCWTTFLLALGSFNALRIIYQTLSVVLQTFVLPGTSLKRFGAKKGAWAVVTGATDGIGKEFAMQLGKAGFNVLLVARNPATLAATAGEIEQKYKVQTGTFSIDFAAATEEKYTALGEVLTGLDVGVLVNNVGKSHNMPAYLVDTPRDEMRDIVEINVNATLRVTYAILPGMVKNKRGLILNIGSFAGAIPSPMLATYSGTKAFLSTFSSALGEEVKKDGIIVENVNTYFVVSKLSKIRKSSLLIPTPAPYVRSVLSKVGLACGAAFSGRPNTSTPYWSHALLDYAMTLVGIPSLFIRYTHNLHIDIRRRALRKLEREAKAQ</sequence>
<gene>
    <name type="ORF">CC1G_02019</name>
</gene>
<keyword id="KW-0256">Endoplasmic reticulum</keyword>
<keyword id="KW-0275">Fatty acid biosynthesis</keyword>
<keyword id="KW-0276">Fatty acid metabolism</keyword>
<keyword id="KW-0444">Lipid biosynthesis</keyword>
<keyword id="KW-0443">Lipid metabolism</keyword>
<keyword id="KW-0472">Membrane</keyword>
<keyword id="KW-0521">NADP</keyword>
<keyword id="KW-0560">Oxidoreductase</keyword>
<keyword id="KW-1185">Reference proteome</keyword>
<keyword id="KW-0812">Transmembrane</keyword>
<keyword id="KW-1133">Transmembrane helix</keyword>
<reference key="1">
    <citation type="journal article" date="2010" name="Proc. Natl. Acad. Sci. U.S.A.">
        <title>Insights into evolution of multicellular fungi from the assembled chromosomes of the mushroom Coprinopsis cinerea (Coprinus cinereus).</title>
        <authorList>
            <person name="Stajich J.E."/>
            <person name="Wilke S.K."/>
            <person name="Ahren D."/>
            <person name="Au C.H."/>
            <person name="Birren B.W."/>
            <person name="Borodovsky M."/>
            <person name="Burns C."/>
            <person name="Canbaeck B."/>
            <person name="Casselton L.A."/>
            <person name="Cheng C.K."/>
            <person name="Deng J."/>
            <person name="Dietrich F.S."/>
            <person name="Fargo D.C."/>
            <person name="Farman M.L."/>
            <person name="Gathman A.C."/>
            <person name="Goldberg J."/>
            <person name="Guigo R."/>
            <person name="Hoegger P.J."/>
            <person name="Hooker J.B."/>
            <person name="Huggins A."/>
            <person name="James T.Y."/>
            <person name="Kamada T."/>
            <person name="Kilaru S."/>
            <person name="Kodira C."/>
            <person name="Kuees U."/>
            <person name="Kupfer D."/>
            <person name="Kwan H.S."/>
            <person name="Lomsadze A."/>
            <person name="Li W."/>
            <person name="Lilly W.W."/>
            <person name="Ma L.-J."/>
            <person name="Mackey A.J."/>
            <person name="Manning G."/>
            <person name="Martin F."/>
            <person name="Muraguchi H."/>
            <person name="Natvig D.O."/>
            <person name="Palmerini H."/>
            <person name="Ramesh M.A."/>
            <person name="Rehmeyer C.J."/>
            <person name="Roe B.A."/>
            <person name="Shenoy N."/>
            <person name="Stanke M."/>
            <person name="Ter-Hovhannisyan V."/>
            <person name="Tunlid A."/>
            <person name="Velagapudi R."/>
            <person name="Vision T.J."/>
            <person name="Zeng Q."/>
            <person name="Zolan M.E."/>
            <person name="Pukkila P.J."/>
        </authorList>
    </citation>
    <scope>NUCLEOTIDE SEQUENCE [LARGE SCALE GENOMIC DNA]</scope>
    <source>
        <strain>Okayama-7 / 130 / ATCC MYA-4618 / FGSC 9003</strain>
    </source>
</reference>
<organism>
    <name type="scientific">Coprinopsis cinerea (strain Okayama-7 / 130 / ATCC MYA-4618 / FGSC 9003)</name>
    <name type="common">Inky cap fungus</name>
    <name type="synonym">Hormographiella aspergillata</name>
    <dbReference type="NCBI Taxonomy" id="240176"/>
    <lineage>
        <taxon>Eukaryota</taxon>
        <taxon>Fungi</taxon>
        <taxon>Dikarya</taxon>
        <taxon>Basidiomycota</taxon>
        <taxon>Agaricomycotina</taxon>
        <taxon>Agaricomycetes</taxon>
        <taxon>Agaricomycetidae</taxon>
        <taxon>Agaricales</taxon>
        <taxon>Agaricineae</taxon>
        <taxon>Psathyrellaceae</taxon>
        <taxon>Coprinopsis</taxon>
    </lineage>
</organism>
<name>MKAR_COPC7</name>
<evidence type="ECO:0000250" key="1">
    <source>
        <dbReference type="UniProtKB" id="L0E2Z4"/>
    </source>
</evidence>
<evidence type="ECO:0000250" key="2">
    <source>
        <dbReference type="UniProtKB" id="O93868"/>
    </source>
</evidence>
<evidence type="ECO:0000250" key="3">
    <source>
        <dbReference type="UniProtKB" id="P38286"/>
    </source>
</evidence>
<evidence type="ECO:0000255" key="4">
    <source>
        <dbReference type="HAMAP-Rule" id="MF_03107"/>
    </source>
</evidence>
<feature type="chain" id="PRO_0000357306" description="Very-long-chain 3-oxoacyl-CoA reductase">
    <location>
        <begin position="1"/>
        <end position="339"/>
    </location>
</feature>
<feature type="transmembrane region" description="Helical" evidence="4">
    <location>
        <begin position="21"/>
        <end position="41"/>
    </location>
</feature>
<feature type="active site" description="Proton acceptor" evidence="4">
    <location>
        <position position="215"/>
    </location>
</feature>
<feature type="active site" description="Lowers pKa of active site Tyr" evidence="2">
    <location>
        <position position="219"/>
    </location>
</feature>
<feature type="binding site" evidence="1">
    <location>
        <position position="67"/>
    </location>
    <ligand>
        <name>NADP(+)</name>
        <dbReference type="ChEBI" id="CHEBI:58349"/>
    </ligand>
</feature>
<feature type="binding site" evidence="1">
    <location>
        <position position="96"/>
    </location>
    <ligand>
        <name>NADP(+)</name>
        <dbReference type="ChEBI" id="CHEBI:58349"/>
    </ligand>
</feature>
<feature type="binding site" evidence="1">
    <location>
        <position position="121"/>
    </location>
    <ligand>
        <name>NADP(+)</name>
        <dbReference type="ChEBI" id="CHEBI:58349"/>
    </ligand>
</feature>
<feature type="binding site" evidence="2">
    <location>
        <position position="148"/>
    </location>
    <ligand>
        <name>NADP(+)</name>
        <dbReference type="ChEBI" id="CHEBI:58349"/>
    </ligand>
</feature>
<feature type="binding site" evidence="2">
    <location>
        <position position="215"/>
    </location>
    <ligand>
        <name>NADP(+)</name>
        <dbReference type="ChEBI" id="CHEBI:58349"/>
    </ligand>
</feature>
<feature type="binding site" evidence="2">
    <location>
        <position position="219"/>
    </location>
    <ligand>
        <name>NADP(+)</name>
        <dbReference type="ChEBI" id="CHEBI:58349"/>
    </ligand>
</feature>
<feature type="binding site" evidence="2">
    <location>
        <position position="248"/>
    </location>
    <ligand>
        <name>NADP(+)</name>
        <dbReference type="ChEBI" id="CHEBI:58349"/>
    </ligand>
</feature>
<feature type="binding site" evidence="1">
    <location>
        <position position="250"/>
    </location>
    <ligand>
        <name>NADP(+)</name>
        <dbReference type="ChEBI" id="CHEBI:58349"/>
    </ligand>
</feature>
<accession>A8N6B4</accession>
<proteinExistence type="inferred from homology"/>
<dbReference type="EC" id="1.1.1.330" evidence="4"/>
<dbReference type="EMBL" id="AACS02000003">
    <property type="protein sequence ID" value="EAU91530.1"/>
    <property type="molecule type" value="Genomic_DNA"/>
</dbReference>
<dbReference type="RefSeq" id="XP_001830383.1">
    <property type="nucleotide sequence ID" value="XM_001830331.1"/>
</dbReference>
<dbReference type="SMR" id="A8N6B4"/>
<dbReference type="FunCoup" id="A8N6B4">
    <property type="interactions" value="429"/>
</dbReference>
<dbReference type="STRING" id="240176.A8N6B4"/>
<dbReference type="GeneID" id="6006825"/>
<dbReference type="KEGG" id="cci:CC1G_02019"/>
<dbReference type="VEuPathDB" id="FungiDB:CC1G_02019"/>
<dbReference type="eggNOG" id="KOG1014">
    <property type="taxonomic scope" value="Eukaryota"/>
</dbReference>
<dbReference type="HOGENOM" id="CLU_010194_38_0_1"/>
<dbReference type="InParanoid" id="A8N6B4"/>
<dbReference type="OMA" id="LVAPGMM"/>
<dbReference type="OrthoDB" id="5545019at2759"/>
<dbReference type="UniPathway" id="UPA00094"/>
<dbReference type="Proteomes" id="UP000001861">
    <property type="component" value="Unassembled WGS sequence"/>
</dbReference>
<dbReference type="GO" id="GO:0005789">
    <property type="term" value="C:endoplasmic reticulum membrane"/>
    <property type="evidence" value="ECO:0007669"/>
    <property type="project" value="UniProtKB-SubCell"/>
</dbReference>
<dbReference type="GO" id="GO:0045703">
    <property type="term" value="F:ketoreductase activity"/>
    <property type="evidence" value="ECO:0007669"/>
    <property type="project" value="UniProtKB-UniRule"/>
</dbReference>
<dbReference type="GO" id="GO:0141040">
    <property type="term" value="F:very-long-chain 3-oxoacyl-CoA reductase activity"/>
    <property type="evidence" value="ECO:0007669"/>
    <property type="project" value="UniProtKB-EC"/>
</dbReference>
<dbReference type="GO" id="GO:0030497">
    <property type="term" value="P:fatty acid elongation"/>
    <property type="evidence" value="ECO:0007669"/>
    <property type="project" value="UniProtKB-UniRule"/>
</dbReference>
<dbReference type="CDD" id="cd05356">
    <property type="entry name" value="17beta-HSD1_like_SDR_c"/>
    <property type="match status" value="1"/>
</dbReference>
<dbReference type="FunFam" id="3.40.50.720:FF:000137">
    <property type="entry name" value="Hydroxysteroid (17-beta) dehydrogenase 3"/>
    <property type="match status" value="1"/>
</dbReference>
<dbReference type="Gene3D" id="3.40.50.720">
    <property type="entry name" value="NAD(P)-binding Rossmann-like Domain"/>
    <property type="match status" value="1"/>
</dbReference>
<dbReference type="HAMAP" id="MF_03107">
    <property type="entry name" value="3_ketoreductase"/>
    <property type="match status" value="1"/>
</dbReference>
<dbReference type="InterPro" id="IPR027533">
    <property type="entry name" value="3_ketoreductase_fungal"/>
</dbReference>
<dbReference type="InterPro" id="IPR036291">
    <property type="entry name" value="NAD(P)-bd_dom_sf"/>
</dbReference>
<dbReference type="InterPro" id="IPR020904">
    <property type="entry name" value="Sc_DH/Rdtase_CS"/>
</dbReference>
<dbReference type="InterPro" id="IPR002347">
    <property type="entry name" value="SDR_fam"/>
</dbReference>
<dbReference type="PANTHER" id="PTHR43086:SF2">
    <property type="entry name" value="HYDROXYSTEROID DEHYDROGENASE-LIKE PROTEIN 1"/>
    <property type="match status" value="1"/>
</dbReference>
<dbReference type="PANTHER" id="PTHR43086">
    <property type="entry name" value="VERY-LONG-CHAIN 3-OXOOACYL-COA REDUCTASE"/>
    <property type="match status" value="1"/>
</dbReference>
<dbReference type="Pfam" id="PF00106">
    <property type="entry name" value="adh_short"/>
    <property type="match status" value="1"/>
</dbReference>
<dbReference type="PIRSF" id="PIRSF000126">
    <property type="entry name" value="11-beta-HSD1"/>
    <property type="match status" value="1"/>
</dbReference>
<dbReference type="PRINTS" id="PR00081">
    <property type="entry name" value="GDHRDH"/>
</dbReference>
<dbReference type="PRINTS" id="PR00080">
    <property type="entry name" value="SDRFAMILY"/>
</dbReference>
<dbReference type="SUPFAM" id="SSF51735">
    <property type="entry name" value="NAD(P)-binding Rossmann-fold domains"/>
    <property type="match status" value="1"/>
</dbReference>
<dbReference type="PROSITE" id="PS00061">
    <property type="entry name" value="ADH_SHORT"/>
    <property type="match status" value="1"/>
</dbReference>